<proteinExistence type="evidence at protein level"/>
<accession>Q9SHJ6</accession>
<accession>A6XH03</accession>
<feature type="chain" id="PRO_0000432896" description="Peroxisomal and mitochondrial division factor 2">
    <location>
        <begin position="1"/>
        <end position="323"/>
    </location>
</feature>
<feature type="topological domain" description="Cytoplasmic" evidence="1">
    <location>
        <begin position="1"/>
        <end position="297"/>
    </location>
</feature>
<feature type="transmembrane region" description="Helical" evidence="2">
    <location>
        <begin position="298"/>
        <end position="318"/>
    </location>
</feature>
<feature type="topological domain" description="Mitochondrial intermembrane" evidence="1">
    <location>
        <begin position="319"/>
        <end position="323"/>
    </location>
</feature>
<feature type="region of interest" description="Disordered" evidence="3">
    <location>
        <begin position="1"/>
        <end position="55"/>
    </location>
</feature>
<feature type="region of interest" description="Disordered" evidence="3">
    <location>
        <begin position="73"/>
        <end position="92"/>
    </location>
</feature>
<feature type="region of interest" description="Disordered" evidence="3">
    <location>
        <begin position="120"/>
        <end position="143"/>
    </location>
</feature>
<feature type="coiled-coil region" evidence="2">
    <location>
        <begin position="28"/>
        <end position="278"/>
    </location>
</feature>
<feature type="compositionally biased region" description="Acidic residues" evidence="3">
    <location>
        <begin position="13"/>
        <end position="26"/>
    </location>
</feature>
<evidence type="ECO:0000250" key="1">
    <source>
        <dbReference type="UniProtKB" id="Q9LXR8"/>
    </source>
</evidence>
<evidence type="ECO:0000255" key="2"/>
<evidence type="ECO:0000256" key="3">
    <source>
        <dbReference type="SAM" id="MobiDB-lite"/>
    </source>
</evidence>
<evidence type="ECO:0000269" key="4">
    <source>
    </source>
</evidence>
<evidence type="ECO:0000269" key="5">
    <source>
    </source>
</evidence>
<evidence type="ECO:0000303" key="6">
    <source>
    </source>
</evidence>
<evidence type="ECO:0000303" key="7">
    <source ref="3"/>
</evidence>
<evidence type="ECO:0000312" key="8">
    <source>
        <dbReference type="Araport" id="AT1G06530"/>
    </source>
</evidence>
<evidence type="ECO:0000312" key="9">
    <source>
        <dbReference type="EMBL" id="AAF24824.1"/>
    </source>
</evidence>
<evidence type="ECO:0000312" key="10">
    <source>
        <dbReference type="Proteomes" id="UP000006548"/>
    </source>
</evidence>
<dbReference type="EMBL" id="AC007592">
    <property type="protein sequence ID" value="AAF24824.1"/>
    <property type="molecule type" value="Genomic_DNA"/>
</dbReference>
<dbReference type="EMBL" id="CP002684">
    <property type="protein sequence ID" value="AEE28002.1"/>
    <property type="molecule type" value="Genomic_DNA"/>
</dbReference>
<dbReference type="EMBL" id="DQ785480">
    <property type="protein sequence ID" value="ABH03547.1"/>
    <property type="molecule type" value="mRNA"/>
</dbReference>
<dbReference type="RefSeq" id="NP_172140.1">
    <property type="nucleotide sequence ID" value="NM_100532.3"/>
</dbReference>
<dbReference type="SMR" id="Q9SHJ6"/>
<dbReference type="FunCoup" id="Q9SHJ6">
    <property type="interactions" value="1771"/>
</dbReference>
<dbReference type="STRING" id="3702.Q9SHJ6"/>
<dbReference type="iPTMnet" id="Q9SHJ6"/>
<dbReference type="PaxDb" id="3702-AT1G06530.1"/>
<dbReference type="ProteomicsDB" id="234688"/>
<dbReference type="EnsemblPlants" id="AT1G06530.1">
    <property type="protein sequence ID" value="AT1G06530.1"/>
    <property type="gene ID" value="AT1G06530"/>
</dbReference>
<dbReference type="GeneID" id="837164"/>
<dbReference type="Gramene" id="AT1G06530.1">
    <property type="protein sequence ID" value="AT1G06530.1"/>
    <property type="gene ID" value="AT1G06530"/>
</dbReference>
<dbReference type="KEGG" id="ath:AT1G06530"/>
<dbReference type="Araport" id="AT1G06530"/>
<dbReference type="TAIR" id="AT1G06530">
    <property type="gene designation" value="PMD2"/>
</dbReference>
<dbReference type="eggNOG" id="ENOG502RY0Y">
    <property type="taxonomic scope" value="Eukaryota"/>
</dbReference>
<dbReference type="HOGENOM" id="CLU_074678_0_0_1"/>
<dbReference type="InParanoid" id="Q9SHJ6"/>
<dbReference type="OMA" id="FYDADQT"/>
<dbReference type="PhylomeDB" id="Q9SHJ6"/>
<dbReference type="PRO" id="PR:Q9SHJ6"/>
<dbReference type="Proteomes" id="UP000006548">
    <property type="component" value="Chromosome 1"/>
</dbReference>
<dbReference type="ExpressionAtlas" id="Q9SHJ6">
    <property type="expression patterns" value="baseline and differential"/>
</dbReference>
<dbReference type="GO" id="GO:0005576">
    <property type="term" value="C:extracellular region"/>
    <property type="evidence" value="ECO:0007005"/>
    <property type="project" value="TAIR"/>
</dbReference>
<dbReference type="GO" id="GO:0005741">
    <property type="term" value="C:mitochondrial outer membrane"/>
    <property type="evidence" value="ECO:0007669"/>
    <property type="project" value="UniProtKB-SubCell"/>
</dbReference>
<dbReference type="GO" id="GO:0005739">
    <property type="term" value="C:mitochondrion"/>
    <property type="evidence" value="ECO:0000314"/>
    <property type="project" value="TAIR"/>
</dbReference>
<dbReference type="GO" id="GO:0000325">
    <property type="term" value="C:plant-type vacuole"/>
    <property type="evidence" value="ECO:0007005"/>
    <property type="project" value="TAIR"/>
</dbReference>
<dbReference type="GO" id="GO:0007005">
    <property type="term" value="P:mitochondrion organization"/>
    <property type="evidence" value="ECO:0000315"/>
    <property type="project" value="TAIR"/>
</dbReference>
<dbReference type="Gene3D" id="1.20.1170.10">
    <property type="match status" value="1"/>
</dbReference>
<dbReference type="Gene3D" id="1.20.5.1160">
    <property type="entry name" value="Vasodilator-stimulated phosphoprotein"/>
    <property type="match status" value="1"/>
</dbReference>
<dbReference type="PANTHER" id="PTHR32083">
    <property type="entry name" value="CILIA AND FLAGELLA-ASSOCIATED PROTEIN 58-RELATED"/>
    <property type="match status" value="1"/>
</dbReference>
<dbReference type="SUPFAM" id="SSF57997">
    <property type="entry name" value="Tropomyosin"/>
    <property type="match status" value="1"/>
</dbReference>
<protein>
    <recommendedName>
        <fullName evidence="6">Peroxisomal and mitochondrial division factor 2</fullName>
    </recommendedName>
    <alternativeName>
        <fullName evidence="7">Ubiquitin-interacting factor 7</fullName>
    </alternativeName>
</protein>
<name>PMD2_ARATH</name>
<gene>
    <name evidence="6" type="primary">PMD2</name>
    <name evidence="7" type="synonym">UBI7</name>
    <name evidence="8" type="ordered locus">At1g06530</name>
    <name evidence="9" type="ORF">F12K11.14</name>
</gene>
<comment type="function">
    <text evidence="5">Involved in morphogenesis and proliferation of mitochondria. Does not act redundantly with PMD1. Is not involved in peroxisomal proliferation.</text>
</comment>
<comment type="subunit">
    <text evidence="5">Homodimer. Interacts with PMD1.</text>
</comment>
<comment type="subcellular location">
    <subcellularLocation>
        <location evidence="4 5">Mitochondrion outer membrane</location>
        <topology evidence="2">Single-pass membrane protein</topology>
    </subcellularLocation>
</comment>
<comment type="miscellaneous">
    <text evidence="5">Plant cells silencing PMD2 show enlarged mitochondria.</text>
</comment>
<organism evidence="10">
    <name type="scientific">Arabidopsis thaliana</name>
    <name type="common">Mouse-ear cress</name>
    <dbReference type="NCBI Taxonomy" id="3702"/>
    <lineage>
        <taxon>Eukaryota</taxon>
        <taxon>Viridiplantae</taxon>
        <taxon>Streptophyta</taxon>
        <taxon>Embryophyta</taxon>
        <taxon>Tracheophyta</taxon>
        <taxon>Spermatophyta</taxon>
        <taxon>Magnoliopsida</taxon>
        <taxon>eudicotyledons</taxon>
        <taxon>Gunneridae</taxon>
        <taxon>Pentapetalae</taxon>
        <taxon>rosids</taxon>
        <taxon>malvids</taxon>
        <taxon>Brassicales</taxon>
        <taxon>Brassicaceae</taxon>
        <taxon>Camelineae</taxon>
        <taxon>Arabidopsis</taxon>
    </lineage>
</organism>
<keyword id="KW-0175">Coiled coil</keyword>
<keyword id="KW-0472">Membrane</keyword>
<keyword id="KW-0496">Mitochondrion</keyword>
<keyword id="KW-1000">Mitochondrion outer membrane</keyword>
<keyword id="KW-1185">Reference proteome</keyword>
<keyword id="KW-0812">Transmembrane</keyword>
<keyword id="KW-1133">Transmembrane helix</keyword>
<sequence length="323" mass="36119">MAEERSLNGEATGQDDESFFDSDQQGDDGKSTELNQKIGDLESQNQELARDNDAINRKIESLTAEIEELRGAESKAKRKMGEMEREIDKSDEERKVLEAIASRASELETEVARLQHELITARTEGEEATAEAEKLRSEISQKGGGIEELEKEVAGLRTVKEENEKRMKELESKLGALEVKELDEKNKKFRAEEEMREKIDNKEKEVHDLKEKIKSLESDVAKGKTELQKWITEKMVVEDSLKDSEKKVVALESEIVELQKQLDDAEKMINGLKNVVEEPLNGIEFKSWSPNVTAVGSGGAVAAVAVAVAGAAVVCYIYHSRRV</sequence>
<reference key="1">
    <citation type="journal article" date="2000" name="Nature">
        <title>Sequence and analysis of chromosome 1 of the plant Arabidopsis thaliana.</title>
        <authorList>
            <person name="Theologis A."/>
            <person name="Ecker J.R."/>
            <person name="Palm C.J."/>
            <person name="Federspiel N.A."/>
            <person name="Kaul S."/>
            <person name="White O."/>
            <person name="Alonso J."/>
            <person name="Altafi H."/>
            <person name="Araujo R."/>
            <person name="Bowman C.L."/>
            <person name="Brooks S.Y."/>
            <person name="Buehler E."/>
            <person name="Chan A."/>
            <person name="Chao Q."/>
            <person name="Chen H."/>
            <person name="Cheuk R.F."/>
            <person name="Chin C.W."/>
            <person name="Chung M.K."/>
            <person name="Conn L."/>
            <person name="Conway A.B."/>
            <person name="Conway A.R."/>
            <person name="Creasy T.H."/>
            <person name="Dewar K."/>
            <person name="Dunn P."/>
            <person name="Etgu P."/>
            <person name="Feldblyum T.V."/>
            <person name="Feng J.-D."/>
            <person name="Fong B."/>
            <person name="Fujii C.Y."/>
            <person name="Gill J.E."/>
            <person name="Goldsmith A.D."/>
            <person name="Haas B."/>
            <person name="Hansen N.F."/>
            <person name="Hughes B."/>
            <person name="Huizar L."/>
            <person name="Hunter J.L."/>
            <person name="Jenkins J."/>
            <person name="Johnson-Hopson C."/>
            <person name="Khan S."/>
            <person name="Khaykin E."/>
            <person name="Kim C.J."/>
            <person name="Koo H.L."/>
            <person name="Kremenetskaia I."/>
            <person name="Kurtz D.B."/>
            <person name="Kwan A."/>
            <person name="Lam B."/>
            <person name="Langin-Hooper S."/>
            <person name="Lee A."/>
            <person name="Lee J.M."/>
            <person name="Lenz C.A."/>
            <person name="Li J.H."/>
            <person name="Li Y.-P."/>
            <person name="Lin X."/>
            <person name="Liu S.X."/>
            <person name="Liu Z.A."/>
            <person name="Luros J.S."/>
            <person name="Maiti R."/>
            <person name="Marziali A."/>
            <person name="Militscher J."/>
            <person name="Miranda M."/>
            <person name="Nguyen M."/>
            <person name="Nierman W.C."/>
            <person name="Osborne B.I."/>
            <person name="Pai G."/>
            <person name="Peterson J."/>
            <person name="Pham P.K."/>
            <person name="Rizzo M."/>
            <person name="Rooney T."/>
            <person name="Rowley D."/>
            <person name="Sakano H."/>
            <person name="Salzberg S.L."/>
            <person name="Schwartz J.R."/>
            <person name="Shinn P."/>
            <person name="Southwick A.M."/>
            <person name="Sun H."/>
            <person name="Tallon L.J."/>
            <person name="Tambunga G."/>
            <person name="Toriumi M.J."/>
            <person name="Town C.D."/>
            <person name="Utterback T."/>
            <person name="Van Aken S."/>
            <person name="Vaysberg M."/>
            <person name="Vysotskaia V.S."/>
            <person name="Walker M."/>
            <person name="Wu D."/>
            <person name="Yu G."/>
            <person name="Fraser C.M."/>
            <person name="Venter J.C."/>
            <person name="Davis R.W."/>
        </authorList>
    </citation>
    <scope>NUCLEOTIDE SEQUENCE [LARGE SCALE GENOMIC DNA]</scope>
    <source>
        <strain>cv. Columbia</strain>
    </source>
</reference>
<reference key="2">
    <citation type="journal article" date="2017" name="Plant J.">
        <title>Araport11: a complete reannotation of the Arabidopsis thaliana reference genome.</title>
        <authorList>
            <person name="Cheng C.Y."/>
            <person name="Krishnakumar V."/>
            <person name="Chan A.P."/>
            <person name="Thibaud-Nissen F."/>
            <person name="Schobel S."/>
            <person name="Town C.D."/>
        </authorList>
    </citation>
    <scope>GENOME REANNOTATION</scope>
    <source>
        <strain>cv. Columbia</strain>
    </source>
</reference>
<reference key="3">
    <citation type="submission" date="2006-06" db="EMBL/GenBank/DDBJ databases">
        <title>Functional differentiation of ubiquitin-interacting factors from Arabidopsis.</title>
        <authorList>
            <person name="Fu H."/>
        </authorList>
    </citation>
    <scope>NUCLEOTIDE SEQUENCE [MRNA] OF 75-200</scope>
</reference>
<reference key="4">
    <citation type="journal article" date="2009" name="Plant Physiol.">
        <title>Large-scale Arabidopsis phosphoproteome profiling reveals novel chloroplast kinase substrates and phosphorylation networks.</title>
        <authorList>
            <person name="Reiland S."/>
            <person name="Messerli G."/>
            <person name="Baerenfaller K."/>
            <person name="Gerrits B."/>
            <person name="Endler A."/>
            <person name="Grossmann J."/>
            <person name="Gruissem W."/>
            <person name="Baginsky S."/>
        </authorList>
    </citation>
    <scope>IDENTIFICATION BY MASS SPECTROMETRY [LARGE SCALE ANALYSIS]</scope>
</reference>
<reference key="5">
    <citation type="journal article" date="2011" name="Plant Cell">
        <title>The Arabidopsis tail-anchored protein PEROXISOMAL AND MITOCHONDRIAL DIVISION FACTOR1 is involved in the morphogenesis and proliferation of peroxisomes and mitochondria.</title>
        <authorList>
            <person name="Aung K."/>
            <person name="Hu J."/>
        </authorList>
    </citation>
    <scope>FUNCTION</scope>
    <scope>SUBUNIT</scope>
    <scope>INTERACTION WITH PMD1</scope>
    <scope>SUBCELLULAR LOCATION</scope>
</reference>
<reference key="6">
    <citation type="journal article" date="2011" name="Plant Physiol.">
        <title>Multiple lines of evidence localize signaling, morphology, and lipid biosynthesis machinery to the mitochondrial outer membrane of Arabidopsis.</title>
        <authorList>
            <person name="Duncan O."/>
            <person name="Taylor N.L."/>
            <person name="Carrie C."/>
            <person name="Eubel H."/>
            <person name="Kubiszewski-Jakubiak S."/>
            <person name="Zhang B."/>
            <person name="Narsai R."/>
            <person name="Millar A.H."/>
            <person name="Whelan J."/>
        </authorList>
    </citation>
    <scope>SUBCELLULAR LOCATION</scope>
</reference>